<comment type="function">
    <text evidence="1">Allows the formation of correctly charged Asn-tRNA(Asn) or Gln-tRNA(Gln) through the transamidation of misacylated Asp-tRNA(Asn) or Glu-tRNA(Gln) in organisms which lack either or both of asparaginyl-tRNA or glutaminyl-tRNA synthetases. The reaction takes place in the presence of glutamine and ATP through an activated phospho-Asp-tRNA(Asn) or phospho-Glu-tRNA(Gln).</text>
</comment>
<comment type="catalytic activity">
    <reaction evidence="1">
        <text>L-glutamyl-tRNA(Gln) + L-glutamine + ATP + H2O = L-glutaminyl-tRNA(Gln) + L-glutamate + ADP + phosphate + H(+)</text>
        <dbReference type="Rhea" id="RHEA:17521"/>
        <dbReference type="Rhea" id="RHEA-COMP:9681"/>
        <dbReference type="Rhea" id="RHEA-COMP:9684"/>
        <dbReference type="ChEBI" id="CHEBI:15377"/>
        <dbReference type="ChEBI" id="CHEBI:15378"/>
        <dbReference type="ChEBI" id="CHEBI:29985"/>
        <dbReference type="ChEBI" id="CHEBI:30616"/>
        <dbReference type="ChEBI" id="CHEBI:43474"/>
        <dbReference type="ChEBI" id="CHEBI:58359"/>
        <dbReference type="ChEBI" id="CHEBI:78520"/>
        <dbReference type="ChEBI" id="CHEBI:78521"/>
        <dbReference type="ChEBI" id="CHEBI:456216"/>
    </reaction>
</comment>
<comment type="catalytic activity">
    <reaction evidence="1">
        <text>L-aspartyl-tRNA(Asn) + L-glutamine + ATP + H2O = L-asparaginyl-tRNA(Asn) + L-glutamate + ADP + phosphate + 2 H(+)</text>
        <dbReference type="Rhea" id="RHEA:14513"/>
        <dbReference type="Rhea" id="RHEA-COMP:9674"/>
        <dbReference type="Rhea" id="RHEA-COMP:9677"/>
        <dbReference type="ChEBI" id="CHEBI:15377"/>
        <dbReference type="ChEBI" id="CHEBI:15378"/>
        <dbReference type="ChEBI" id="CHEBI:29985"/>
        <dbReference type="ChEBI" id="CHEBI:30616"/>
        <dbReference type="ChEBI" id="CHEBI:43474"/>
        <dbReference type="ChEBI" id="CHEBI:58359"/>
        <dbReference type="ChEBI" id="CHEBI:78515"/>
        <dbReference type="ChEBI" id="CHEBI:78516"/>
        <dbReference type="ChEBI" id="CHEBI:456216"/>
    </reaction>
</comment>
<comment type="subunit">
    <text evidence="1">Heterotrimer of A, B and C subunits.</text>
</comment>
<comment type="similarity">
    <text evidence="1">Belongs to the GatB/GatE family. GatB subfamily.</text>
</comment>
<gene>
    <name evidence="1" type="primary">gatB</name>
    <name type="ordered locus">lp_1149</name>
</gene>
<evidence type="ECO:0000255" key="1">
    <source>
        <dbReference type="HAMAP-Rule" id="MF_00121"/>
    </source>
</evidence>
<protein>
    <recommendedName>
        <fullName evidence="1">Aspartyl/glutamyl-tRNA(Asn/Gln) amidotransferase subunit B</fullName>
        <shortName evidence="1">Asp/Glu-ADT subunit B</shortName>
        <ecNumber evidence="1">6.3.5.-</ecNumber>
    </recommendedName>
</protein>
<keyword id="KW-0067">ATP-binding</keyword>
<keyword id="KW-0436">Ligase</keyword>
<keyword id="KW-0547">Nucleotide-binding</keyword>
<keyword id="KW-0648">Protein biosynthesis</keyword>
<keyword id="KW-1185">Reference proteome</keyword>
<feature type="chain" id="PRO_0000148798" description="Aspartyl/glutamyl-tRNA(Asn/Gln) amidotransferase subunit B">
    <location>
        <begin position="1"/>
        <end position="474"/>
    </location>
</feature>
<reference key="1">
    <citation type="journal article" date="2003" name="Proc. Natl. Acad. Sci. U.S.A.">
        <title>Complete genome sequence of Lactobacillus plantarum WCFS1.</title>
        <authorList>
            <person name="Kleerebezem M."/>
            <person name="Boekhorst J."/>
            <person name="van Kranenburg R."/>
            <person name="Molenaar D."/>
            <person name="Kuipers O.P."/>
            <person name="Leer R."/>
            <person name="Tarchini R."/>
            <person name="Peters S.A."/>
            <person name="Sandbrink H.M."/>
            <person name="Fiers M.W.E.J."/>
            <person name="Stiekema W."/>
            <person name="Klein Lankhorst R.M."/>
            <person name="Bron P.A."/>
            <person name="Hoffer S.M."/>
            <person name="Nierop Groot M.N."/>
            <person name="Kerkhoven R."/>
            <person name="De Vries M."/>
            <person name="Ursing B."/>
            <person name="De Vos W.M."/>
            <person name="Siezen R.J."/>
        </authorList>
    </citation>
    <scope>NUCLEOTIDE SEQUENCE [LARGE SCALE GENOMIC DNA]</scope>
    <source>
        <strain>ATCC BAA-793 / NCIMB 8826 / WCFS1</strain>
    </source>
</reference>
<reference key="2">
    <citation type="journal article" date="2012" name="J. Bacteriol.">
        <title>Complete resequencing and reannotation of the Lactobacillus plantarum WCFS1 genome.</title>
        <authorList>
            <person name="Siezen R.J."/>
            <person name="Francke C."/>
            <person name="Renckens B."/>
            <person name="Boekhorst J."/>
            <person name="Wels M."/>
            <person name="Kleerebezem M."/>
            <person name="van Hijum S.A."/>
        </authorList>
    </citation>
    <scope>NUCLEOTIDE SEQUENCE [LARGE SCALE GENOMIC DNA]</scope>
    <scope>GENOME REANNOTATION</scope>
    <source>
        <strain>ATCC BAA-793 / NCIMB 8826 / WCFS1</strain>
    </source>
</reference>
<name>GATB_LACPL</name>
<proteinExistence type="inferred from homology"/>
<accession>Q88XP6</accession>
<accession>F9UMV0</accession>
<organism>
    <name type="scientific">Lactiplantibacillus plantarum (strain ATCC BAA-793 / NCIMB 8826 / WCFS1)</name>
    <name type="common">Lactobacillus plantarum</name>
    <dbReference type="NCBI Taxonomy" id="220668"/>
    <lineage>
        <taxon>Bacteria</taxon>
        <taxon>Bacillati</taxon>
        <taxon>Bacillota</taxon>
        <taxon>Bacilli</taxon>
        <taxon>Lactobacillales</taxon>
        <taxon>Lactobacillaceae</taxon>
        <taxon>Lactiplantibacillus</taxon>
    </lineage>
</organism>
<sequence>MNFVTTIGLEVHVELKTNSKIFSPSPVQFGSEPNANTNVIDWGYPGVLPTPNKGVVEAGIKAATALHAEIEHHTYFDRKNYFYPDNPKAYQITQHEKPIAHDGWIEIEVDGKKKKIGIEEMHIEEDAGKNTHENDYSYVDLNRQGTPLIEIVSKPDIASPEEAYAYCEALRQRIQFTGVSDVKMEEGSMRVDVNISIRPAGSDKYGVKTEMKNLNSFNYVRKSLEYEEQRQQQVLMAGGKIQQETRRFDETTGQTILMRVKEGSDDYRYFPEPDIPAVDIDDDWIASVKKTIPEMPGSRRERYINEFGLTAYDAGVLTQTKEMSDFFDATVAEGADPKLASNYLQGDVNAYLNEHKVDLLATDLTPTNLAGMIKMISDETISSKIAKKVFKAIMAGSEPVQWVNDKGLVQLSDPAKLQPIVDDVLDNNQQSIDDFKNGKDRAVGFLVGQIMKKTRGQANPKVVNQLLMTSLKAR</sequence>
<dbReference type="EC" id="6.3.5.-" evidence="1"/>
<dbReference type="EMBL" id="AL935263">
    <property type="protein sequence ID" value="CCC78539.1"/>
    <property type="molecule type" value="Genomic_DNA"/>
</dbReference>
<dbReference type="RefSeq" id="WP_003641343.1">
    <property type="nucleotide sequence ID" value="NC_004567.2"/>
</dbReference>
<dbReference type="RefSeq" id="YP_004889053.1">
    <property type="nucleotide sequence ID" value="NC_004567.2"/>
</dbReference>
<dbReference type="SMR" id="Q88XP6"/>
<dbReference type="STRING" id="220668.lp_1149"/>
<dbReference type="DNASU" id="1063228"/>
<dbReference type="EnsemblBacteria" id="CCC78539">
    <property type="protein sequence ID" value="CCC78539"/>
    <property type="gene ID" value="lp_1149"/>
</dbReference>
<dbReference type="GeneID" id="77217616"/>
<dbReference type="KEGG" id="lpl:lp_1149"/>
<dbReference type="PATRIC" id="fig|220668.9.peg.970"/>
<dbReference type="eggNOG" id="COG0064">
    <property type="taxonomic scope" value="Bacteria"/>
</dbReference>
<dbReference type="HOGENOM" id="CLU_019240_0_0_9"/>
<dbReference type="OrthoDB" id="9804078at2"/>
<dbReference type="PhylomeDB" id="Q88XP6"/>
<dbReference type="Proteomes" id="UP000000432">
    <property type="component" value="Chromosome"/>
</dbReference>
<dbReference type="GO" id="GO:0050566">
    <property type="term" value="F:asparaginyl-tRNA synthase (glutamine-hydrolyzing) activity"/>
    <property type="evidence" value="ECO:0007669"/>
    <property type="project" value="RHEA"/>
</dbReference>
<dbReference type="GO" id="GO:0005524">
    <property type="term" value="F:ATP binding"/>
    <property type="evidence" value="ECO:0007669"/>
    <property type="project" value="UniProtKB-KW"/>
</dbReference>
<dbReference type="GO" id="GO:0050567">
    <property type="term" value="F:glutaminyl-tRNA synthase (glutamine-hydrolyzing) activity"/>
    <property type="evidence" value="ECO:0007669"/>
    <property type="project" value="UniProtKB-UniRule"/>
</dbReference>
<dbReference type="GO" id="GO:0070681">
    <property type="term" value="P:glutaminyl-tRNAGln biosynthesis via transamidation"/>
    <property type="evidence" value="ECO:0007669"/>
    <property type="project" value="TreeGrafter"/>
</dbReference>
<dbReference type="GO" id="GO:0006412">
    <property type="term" value="P:translation"/>
    <property type="evidence" value="ECO:0007669"/>
    <property type="project" value="UniProtKB-UniRule"/>
</dbReference>
<dbReference type="FunFam" id="1.10.10.410:FF:000001">
    <property type="entry name" value="Aspartyl/glutamyl-tRNA(Asn/Gln) amidotransferase subunit B"/>
    <property type="match status" value="1"/>
</dbReference>
<dbReference type="FunFam" id="1.10.150.380:FF:000001">
    <property type="entry name" value="Aspartyl/glutamyl-tRNA(Asn/Gln) amidotransferase subunit B"/>
    <property type="match status" value="1"/>
</dbReference>
<dbReference type="Gene3D" id="1.10.10.410">
    <property type="match status" value="1"/>
</dbReference>
<dbReference type="Gene3D" id="1.10.150.380">
    <property type="entry name" value="GatB domain, N-terminal subdomain"/>
    <property type="match status" value="1"/>
</dbReference>
<dbReference type="HAMAP" id="MF_00121">
    <property type="entry name" value="GatB"/>
    <property type="match status" value="1"/>
</dbReference>
<dbReference type="InterPro" id="IPR017959">
    <property type="entry name" value="Asn/Gln-tRNA_amidoTrfase_suB/E"/>
</dbReference>
<dbReference type="InterPro" id="IPR006075">
    <property type="entry name" value="Asn/Gln-tRNA_Trfase_suB/E_cat"/>
</dbReference>
<dbReference type="InterPro" id="IPR018027">
    <property type="entry name" value="Asn/Gln_amidotransferase"/>
</dbReference>
<dbReference type="InterPro" id="IPR003789">
    <property type="entry name" value="Asn/Gln_tRNA_amidoTrase-B-like"/>
</dbReference>
<dbReference type="InterPro" id="IPR004413">
    <property type="entry name" value="GatB"/>
</dbReference>
<dbReference type="InterPro" id="IPR042114">
    <property type="entry name" value="GatB_C_1"/>
</dbReference>
<dbReference type="InterPro" id="IPR023168">
    <property type="entry name" value="GatB_Yqey_C_2"/>
</dbReference>
<dbReference type="InterPro" id="IPR017958">
    <property type="entry name" value="Gln-tRNA_amidoTrfase_suB_CS"/>
</dbReference>
<dbReference type="InterPro" id="IPR014746">
    <property type="entry name" value="Gln_synth/guanido_kin_cat_dom"/>
</dbReference>
<dbReference type="NCBIfam" id="TIGR00133">
    <property type="entry name" value="gatB"/>
    <property type="match status" value="1"/>
</dbReference>
<dbReference type="NCBIfam" id="NF004011">
    <property type="entry name" value="PRK05477.1-1"/>
    <property type="match status" value="1"/>
</dbReference>
<dbReference type="NCBIfam" id="NF004012">
    <property type="entry name" value="PRK05477.1-2"/>
    <property type="match status" value="1"/>
</dbReference>
<dbReference type="NCBIfam" id="NF004014">
    <property type="entry name" value="PRK05477.1-4"/>
    <property type="match status" value="1"/>
</dbReference>
<dbReference type="PANTHER" id="PTHR11659">
    <property type="entry name" value="GLUTAMYL-TRNA GLN AMIDOTRANSFERASE SUBUNIT B MITOCHONDRIAL AND PROKARYOTIC PET112-RELATED"/>
    <property type="match status" value="1"/>
</dbReference>
<dbReference type="PANTHER" id="PTHR11659:SF0">
    <property type="entry name" value="GLUTAMYL-TRNA(GLN) AMIDOTRANSFERASE SUBUNIT B, MITOCHONDRIAL"/>
    <property type="match status" value="1"/>
</dbReference>
<dbReference type="Pfam" id="PF02934">
    <property type="entry name" value="GatB_N"/>
    <property type="match status" value="1"/>
</dbReference>
<dbReference type="Pfam" id="PF02637">
    <property type="entry name" value="GatB_Yqey"/>
    <property type="match status" value="1"/>
</dbReference>
<dbReference type="SMART" id="SM00845">
    <property type="entry name" value="GatB_Yqey"/>
    <property type="match status" value="1"/>
</dbReference>
<dbReference type="SUPFAM" id="SSF89095">
    <property type="entry name" value="GatB/YqeY motif"/>
    <property type="match status" value="1"/>
</dbReference>
<dbReference type="SUPFAM" id="SSF55931">
    <property type="entry name" value="Glutamine synthetase/guanido kinase"/>
    <property type="match status" value="1"/>
</dbReference>
<dbReference type="PROSITE" id="PS01234">
    <property type="entry name" value="GATB"/>
    <property type="match status" value="1"/>
</dbReference>